<organism>
    <name type="scientific">Neurospora crassa (strain ATCC 24698 / 74-OR23-1A / CBS 708.71 / DSM 1257 / FGSC 987)</name>
    <dbReference type="NCBI Taxonomy" id="367110"/>
    <lineage>
        <taxon>Eukaryota</taxon>
        <taxon>Fungi</taxon>
        <taxon>Dikarya</taxon>
        <taxon>Ascomycota</taxon>
        <taxon>Pezizomycotina</taxon>
        <taxon>Sordariomycetes</taxon>
        <taxon>Sordariomycetidae</taxon>
        <taxon>Sordariales</taxon>
        <taxon>Sordariaceae</taxon>
        <taxon>Neurospora</taxon>
    </lineage>
</organism>
<dbReference type="EC" id="1.2.1.-" evidence="3 4 5 6"/>
<dbReference type="EC" id="1.2.1.30" evidence="3 4 5 6"/>
<dbReference type="EMBL" id="CM002241">
    <property type="protein sequence ID" value="EAA26584.1"/>
    <property type="molecule type" value="Genomic_DNA"/>
</dbReference>
<dbReference type="RefSeq" id="XP_955820.1">
    <property type="nucleotide sequence ID" value="XM_950727.2"/>
</dbReference>
<dbReference type="PDB" id="8AEP">
    <property type="method" value="X-ray"/>
    <property type="resolution" value="2.30 A"/>
    <property type="chains" value="A/B=650-1052"/>
</dbReference>
<dbReference type="PDBsum" id="8AEP"/>
<dbReference type="SMR" id="Q7RW48"/>
<dbReference type="STRING" id="367110.Q7RW48"/>
<dbReference type="PaxDb" id="5141-EFNCRP00000001459"/>
<dbReference type="EnsemblFungi" id="EAA26584">
    <property type="protein sequence ID" value="EAA26584"/>
    <property type="gene ID" value="NCU05000"/>
</dbReference>
<dbReference type="GeneID" id="3871967"/>
<dbReference type="KEGG" id="ncr:NCU05000"/>
<dbReference type="VEuPathDB" id="FungiDB:NCU05000"/>
<dbReference type="HOGENOM" id="CLU_002220_0_0_1"/>
<dbReference type="InParanoid" id="Q7RW48"/>
<dbReference type="OrthoDB" id="429813at2759"/>
<dbReference type="Proteomes" id="UP000001805">
    <property type="component" value="Chromosome 5, Linkage Group VI"/>
</dbReference>
<dbReference type="GO" id="GO:0005524">
    <property type="term" value="F:ATP binding"/>
    <property type="evidence" value="ECO:0007669"/>
    <property type="project" value="UniProtKB-KW"/>
</dbReference>
<dbReference type="GO" id="GO:0031956">
    <property type="term" value="F:medium-chain fatty acid-CoA ligase activity"/>
    <property type="evidence" value="ECO:0000318"/>
    <property type="project" value="GO_Central"/>
</dbReference>
<dbReference type="GO" id="GO:0016491">
    <property type="term" value="F:oxidoreductase activity"/>
    <property type="evidence" value="ECO:0007669"/>
    <property type="project" value="UniProtKB-KW"/>
</dbReference>
<dbReference type="GO" id="GO:0006631">
    <property type="term" value="P:fatty acid metabolic process"/>
    <property type="evidence" value="ECO:0000318"/>
    <property type="project" value="GO_Central"/>
</dbReference>
<dbReference type="Gene3D" id="1.10.1200.10">
    <property type="entry name" value="ACP-like"/>
    <property type="match status" value="1"/>
</dbReference>
<dbReference type="Gene3D" id="3.40.50.12780">
    <property type="entry name" value="N-terminal domain of ligase-like"/>
    <property type="match status" value="1"/>
</dbReference>
<dbReference type="Gene3D" id="3.40.50.720">
    <property type="entry name" value="NAD(P)-binding Rossmann-like Domain"/>
    <property type="match status" value="1"/>
</dbReference>
<dbReference type="InterPro" id="IPR036736">
    <property type="entry name" value="ACP-like_sf"/>
</dbReference>
<dbReference type="InterPro" id="IPR051414">
    <property type="entry name" value="Adenylate-forming_Reductase"/>
</dbReference>
<dbReference type="InterPro" id="IPR020845">
    <property type="entry name" value="AMP-binding_CS"/>
</dbReference>
<dbReference type="InterPro" id="IPR000873">
    <property type="entry name" value="AMP-dep_synth/lig_dom"/>
</dbReference>
<dbReference type="InterPro" id="IPR042099">
    <property type="entry name" value="ANL_N_sf"/>
</dbReference>
<dbReference type="InterPro" id="IPR013120">
    <property type="entry name" value="Far_NAD-bd"/>
</dbReference>
<dbReference type="InterPro" id="IPR036291">
    <property type="entry name" value="NAD(P)-bd_dom_sf"/>
</dbReference>
<dbReference type="InterPro" id="IPR009081">
    <property type="entry name" value="PP-bd_ACP"/>
</dbReference>
<dbReference type="InterPro" id="IPR006162">
    <property type="entry name" value="Ppantetheine_attach_site"/>
</dbReference>
<dbReference type="PANTHER" id="PTHR43439:SF2">
    <property type="entry name" value="ENZYME, PUTATIVE (JCVI)-RELATED"/>
    <property type="match status" value="1"/>
</dbReference>
<dbReference type="PANTHER" id="PTHR43439">
    <property type="entry name" value="PHENYLACETATE-COENZYME A LIGASE"/>
    <property type="match status" value="1"/>
</dbReference>
<dbReference type="Pfam" id="PF00501">
    <property type="entry name" value="AMP-binding"/>
    <property type="match status" value="1"/>
</dbReference>
<dbReference type="Pfam" id="PF23562">
    <property type="entry name" value="AMP-binding_C_3"/>
    <property type="match status" value="1"/>
</dbReference>
<dbReference type="Pfam" id="PF07993">
    <property type="entry name" value="NAD_binding_4"/>
    <property type="match status" value="1"/>
</dbReference>
<dbReference type="Pfam" id="PF00550">
    <property type="entry name" value="PP-binding"/>
    <property type="match status" value="1"/>
</dbReference>
<dbReference type="SUPFAM" id="SSF56801">
    <property type="entry name" value="Acetyl-CoA synthetase-like"/>
    <property type="match status" value="1"/>
</dbReference>
<dbReference type="SUPFAM" id="SSF47336">
    <property type="entry name" value="ACP-like"/>
    <property type="match status" value="1"/>
</dbReference>
<dbReference type="SUPFAM" id="SSF51735">
    <property type="entry name" value="NAD(P)-binding Rossmann-fold domains"/>
    <property type="match status" value="1"/>
</dbReference>
<dbReference type="PROSITE" id="PS00455">
    <property type="entry name" value="AMP_BINDING"/>
    <property type="match status" value="1"/>
</dbReference>
<dbReference type="PROSITE" id="PS50075">
    <property type="entry name" value="CARRIER"/>
    <property type="match status" value="1"/>
</dbReference>
<dbReference type="PROSITE" id="PS00012">
    <property type="entry name" value="PHOSPHOPANTETHEINE"/>
    <property type="match status" value="1"/>
</dbReference>
<name>CAR_NEUCR</name>
<accession>Q7RW48</accession>
<proteinExistence type="evidence at protein level"/>
<keyword id="KW-0002">3D-structure</keyword>
<keyword id="KW-0067">ATP-binding</keyword>
<keyword id="KW-0521">NADP</keyword>
<keyword id="KW-0547">Nucleotide-binding</keyword>
<keyword id="KW-0560">Oxidoreductase</keyword>
<keyword id="KW-0596">Phosphopantetheine</keyword>
<keyword id="KW-0597">Phosphoprotein</keyword>
<keyword id="KW-1185">Reference proteome</keyword>
<gene>
    <name type="ORF">NCU05000</name>
</gene>
<feature type="chain" id="PRO_0000454508" description="Carboxylic acid reductase">
    <location>
        <begin position="1"/>
        <end position="1052"/>
    </location>
</feature>
<feature type="domain" description="Carrier" evidence="2">
    <location>
        <begin position="560"/>
        <end position="643"/>
    </location>
</feature>
<feature type="region of interest" description="Adenylation (A) domain" evidence="10">
    <location>
        <begin position="21"/>
        <end position="344"/>
    </location>
</feature>
<feature type="region of interest" description="Carboxylic acid reductase (R) domain" evidence="10">
    <location>
        <begin position="684"/>
        <end position="979"/>
    </location>
</feature>
<feature type="binding site" evidence="1">
    <location>
        <begin position="334"/>
        <end position="335"/>
    </location>
    <ligand>
        <name>AMP</name>
        <dbReference type="ChEBI" id="CHEBI:456215"/>
    </ligand>
</feature>
<feature type="binding site" evidence="1">
    <location>
        <position position="339"/>
    </location>
    <ligand>
        <name>AMP</name>
        <dbReference type="ChEBI" id="CHEBI:456215"/>
    </ligand>
</feature>
<feature type="binding site" evidence="1">
    <location>
        <begin position="419"/>
        <end position="422"/>
    </location>
    <ligand>
        <name>AMP</name>
        <dbReference type="ChEBI" id="CHEBI:456215"/>
    </ligand>
</feature>
<feature type="binding site" evidence="1">
    <location>
        <begin position="693"/>
        <end position="696"/>
    </location>
    <ligand>
        <name>NADP(+)</name>
        <dbReference type="ChEBI" id="CHEBI:58349"/>
    </ligand>
</feature>
<feature type="binding site" evidence="1">
    <location>
        <position position="718"/>
    </location>
    <ligand>
        <name>NADP(+)</name>
        <dbReference type="ChEBI" id="CHEBI:58349"/>
    </ligand>
</feature>
<feature type="binding site" evidence="1">
    <location>
        <begin position="774"/>
        <end position="776"/>
    </location>
    <ligand>
        <name>NADP(+)</name>
        <dbReference type="ChEBI" id="CHEBI:58349"/>
    </ligand>
</feature>
<feature type="binding site" evidence="1">
    <location>
        <position position="814"/>
    </location>
    <ligand>
        <name>NADP(+)</name>
        <dbReference type="ChEBI" id="CHEBI:58349"/>
    </ligand>
</feature>
<feature type="binding site" evidence="1">
    <location>
        <position position="844"/>
    </location>
    <ligand>
        <name>NADP(+)</name>
        <dbReference type="ChEBI" id="CHEBI:58349"/>
    </ligand>
</feature>
<feature type="binding site" evidence="1">
    <location>
        <position position="848"/>
    </location>
    <ligand>
        <name>NADP(+)</name>
        <dbReference type="ChEBI" id="CHEBI:58349"/>
    </ligand>
</feature>
<feature type="modified residue" description="O-(pantetheine 4'-phosphoryl)serine" evidence="2">
    <location>
        <position position="595"/>
    </location>
</feature>
<feature type="mutagenesis site" description="Decreases CAR activity." evidence="5">
    <original>S</original>
    <variation>A</variation>
    <location>
        <position position="183"/>
    </location>
</feature>
<feature type="mutagenesis site" description="Reduces the solubility of the protein." evidence="5">
    <original>G</original>
    <variation>A</variation>
    <location>
        <position position="184"/>
    </location>
</feature>
<feature type="mutagenesis site" description="Enhances the specific activity with hexanoic acid." evidence="5">
    <original>P</original>
    <variation>A</variation>
    <location>
        <position position="189"/>
    </location>
</feature>
<feature type="mutagenesis site" description="Enhances the specific activity with aliphatic acids." evidence="5">
    <original>P</original>
    <variation>A</variation>
    <location>
        <position position="234"/>
    </location>
</feature>
<feature type="mutagenesis site" description="Abolishes CAR activity." evidence="5">
    <original>H</original>
    <variation>A</variation>
    <location>
        <position position="237"/>
    </location>
</feature>
<feature type="mutagenesis site" description="Increases the activity for the reduction of piperonylic acid and aliphatic acids." evidence="5">
    <original>P</original>
    <variation>A</variation>
    <location>
        <position position="285"/>
    </location>
</feature>
<feature type="mutagenesis site" description="Does not affect activity with cinnamic acid, but a decreases activity with piperonylic and hexanoic acid." evidence="5">
    <original>G</original>
    <variation>A</variation>
    <location>
        <position position="310"/>
    </location>
</feature>
<feature type="mutagenesis site" description="Decreases CAR activity and retains activity mainly on piperonylic acid." evidence="5">
    <original>T</original>
    <variation>A</variation>
    <location>
        <position position="336"/>
    </location>
</feature>
<feature type="mutagenesis site" description="Decreases CAR activity and shows activity solely on piperonylic acid." evidence="5">
    <original>D</original>
    <variation>A</variation>
    <location>
        <position position="405"/>
    </location>
</feature>
<feature type="mutagenesis site" description="Decreases CAR activity." evidence="5">
    <original>R</original>
    <variation>A</variation>
    <location>
        <position position="422"/>
    </location>
</feature>
<feature type="mutagenesis site" description="Abolishes CAR activity." evidence="5">
    <original>E</original>
    <variation>A</variation>
    <location>
        <position position="433"/>
    </location>
</feature>
<feature type="mutagenesis site" description="Enhances the specific activity with hexanoic acid." evidence="5">
    <original>E</original>
    <variation>A</variation>
    <location>
        <position position="441"/>
    </location>
</feature>
<feature type="mutagenesis site" description="Decreases CAR activity, but enhances the specific activity with hexanoic acid." evidence="5">
    <original>G</original>
    <variation>A</variation>
    <location>
        <position position="457"/>
    </location>
</feature>
<feature type="mutagenesis site" description="Abolishes CAR activity." evidence="5">
    <original>S</original>
    <variation>A</variation>
    <location>
        <position position="595"/>
    </location>
</feature>
<feature type="mutagenesis site" description="Leads to only residual activity." evidence="5">
    <original>G</original>
    <variation>A</variation>
    <location>
        <position position="691"/>
    </location>
</feature>
<feature type="mutagenesis site" description="Leads to only residual activity." evidence="5">
    <original>G</original>
    <variation>A</variation>
    <location>
        <position position="694"/>
    </location>
</feature>
<feature type="mutagenesis site" description="Abolishes CAR activity." evidence="5">
    <original>Y</original>
    <variation>A</variation>
    <location>
        <position position="844"/>
    </location>
</feature>
<feature type="mutagenesis site" description="Abolishes CAR activity." evidence="5">
    <original>K</original>
    <variation>A</variation>
    <location>
        <position position="848"/>
    </location>
</feature>
<feature type="mutagenesis site" description="Reduces the solubility of the protein." evidence="5">
    <original>R</original>
    <variation>A</variation>
    <location>
        <position position="870"/>
    </location>
</feature>
<feature type="mutagenesis site" description="Decreases CAR activity." evidence="5">
    <original>G</original>
    <variation>A</variation>
    <location>
        <position position="882"/>
    </location>
</feature>
<feature type="mutagenesis site" description="Reduces the solubility of the protein and decreases CAR activity." evidence="5">
    <original>P</original>
    <variation>A</variation>
    <location>
        <position position="904"/>
    </location>
</feature>
<feature type="mutagenesis site" description="Reduces the solubility of the protein." evidence="5">
    <original>W</original>
    <variation>A</variation>
    <location>
        <position position="978"/>
    </location>
</feature>
<feature type="helix" evidence="11">
    <location>
        <begin position="651"/>
        <end position="667"/>
    </location>
</feature>
<feature type="strand" evidence="11">
    <location>
        <begin position="682"/>
        <end position="690"/>
    </location>
</feature>
<feature type="helix" evidence="11">
    <location>
        <begin position="695"/>
        <end position="706"/>
    </location>
</feature>
<feature type="strand" evidence="11">
    <location>
        <begin position="710"/>
        <end position="720"/>
    </location>
</feature>
<feature type="helix" evidence="11">
    <location>
        <begin position="722"/>
        <end position="732"/>
    </location>
</feature>
<feature type="strand" evidence="11">
    <location>
        <begin position="742"/>
        <end position="746"/>
    </location>
</feature>
<feature type="turn" evidence="11">
    <location>
        <begin position="752"/>
        <end position="755"/>
    </location>
</feature>
<feature type="helix" evidence="11">
    <location>
        <begin position="758"/>
        <end position="767"/>
    </location>
</feature>
<feature type="strand" evidence="11">
    <location>
        <begin position="770"/>
        <end position="773"/>
    </location>
</feature>
<feature type="strand" evidence="11">
    <location>
        <begin position="780"/>
        <end position="782"/>
    </location>
</feature>
<feature type="helix" evidence="11">
    <location>
        <begin position="784"/>
        <end position="787"/>
    </location>
</feature>
<feature type="helix" evidence="11">
    <location>
        <begin position="788"/>
        <end position="803"/>
    </location>
</feature>
<feature type="strand" evidence="11">
    <location>
        <begin position="804"/>
        <end position="806"/>
    </location>
</feature>
<feature type="strand" evidence="11">
    <location>
        <begin position="810"/>
        <end position="815"/>
    </location>
</feature>
<feature type="helix" evidence="11">
    <location>
        <begin position="816"/>
        <end position="819"/>
    </location>
</feature>
<feature type="strand" evidence="11">
    <location>
        <begin position="825"/>
        <end position="827"/>
    </location>
</feature>
<feature type="helix" evidence="11">
    <location>
        <begin position="837"/>
        <end position="839"/>
    </location>
</feature>
<feature type="helix" evidence="11">
    <location>
        <begin position="843"/>
        <end position="862"/>
    </location>
</feature>
<feature type="strand" evidence="11">
    <location>
        <begin position="866"/>
        <end position="871"/>
    </location>
</feature>
<feature type="strand" evidence="11">
    <location>
        <begin position="878"/>
        <end position="882"/>
    </location>
</feature>
<feature type="helix" evidence="11">
    <location>
        <begin position="889"/>
        <end position="900"/>
    </location>
</feature>
<feature type="strand" evidence="11">
    <location>
        <begin position="902"/>
        <end position="905"/>
    </location>
</feature>
<feature type="strand" evidence="11">
    <location>
        <begin position="907"/>
        <end position="910"/>
    </location>
</feature>
<feature type="helix" evidence="11">
    <location>
        <begin position="918"/>
        <end position="928"/>
    </location>
</feature>
<feature type="strand" evidence="11">
    <location>
        <begin position="931"/>
        <end position="933"/>
    </location>
</feature>
<feature type="helix" evidence="11">
    <location>
        <begin position="937"/>
        <end position="939"/>
    </location>
</feature>
<feature type="strand" evidence="11">
    <location>
        <begin position="942"/>
        <end position="947"/>
    </location>
</feature>
<feature type="helix" evidence="11">
    <location>
        <begin position="954"/>
        <end position="964"/>
    </location>
</feature>
<feature type="turn" evidence="11">
    <location>
        <begin position="965"/>
        <end position="968"/>
    </location>
</feature>
<feature type="strand" evidence="11">
    <location>
        <begin position="971"/>
        <end position="973"/>
    </location>
</feature>
<feature type="helix" evidence="11">
    <location>
        <begin position="975"/>
        <end position="985"/>
    </location>
</feature>
<feature type="helix" evidence="11">
    <location>
        <begin position="996"/>
        <end position="998"/>
    </location>
</feature>
<feature type="strand" evidence="11">
    <location>
        <begin position="1001"/>
        <end position="1007"/>
    </location>
</feature>
<feature type="helix" evidence="11">
    <location>
        <begin position="1009"/>
        <end position="1015"/>
    </location>
</feature>
<feature type="helix" evidence="11">
    <location>
        <begin position="1023"/>
        <end position="1028"/>
    </location>
</feature>
<feature type="helix" evidence="11">
    <location>
        <begin position="1030"/>
        <end position="1033"/>
    </location>
</feature>
<feature type="helix" evidence="11">
    <location>
        <begin position="1040"/>
        <end position="1050"/>
    </location>
</feature>
<evidence type="ECO:0000250" key="1">
    <source>
        <dbReference type="UniProtKB" id="Q6RKB1"/>
    </source>
</evidence>
<evidence type="ECO:0000255" key="2">
    <source>
        <dbReference type="PROSITE-ProRule" id="PRU00258"/>
    </source>
</evidence>
<evidence type="ECO:0000269" key="3">
    <source>
    </source>
</evidence>
<evidence type="ECO:0000269" key="4">
    <source>
    </source>
</evidence>
<evidence type="ECO:0000269" key="5">
    <source>
    </source>
</evidence>
<evidence type="ECO:0000269" key="6">
    <source>
    </source>
</evidence>
<evidence type="ECO:0000303" key="7">
    <source>
    </source>
</evidence>
<evidence type="ECO:0000303" key="8">
    <source>
    </source>
</evidence>
<evidence type="ECO:0000305" key="9"/>
<evidence type="ECO:0000305" key="10">
    <source>
    </source>
</evidence>
<evidence type="ECO:0007829" key="11">
    <source>
        <dbReference type="PDB" id="8AEP"/>
    </source>
</evidence>
<protein>
    <recommendedName>
        <fullName evidence="7">Carboxylic acid reductase</fullName>
        <shortName evidence="7">CAR</shortName>
        <ecNumber evidence="3 4 5 6">1.2.1.-</ecNumber>
        <ecNumber evidence="3 4 5 6">1.2.1.30</ecNumber>
    </recommendedName>
    <alternativeName>
        <fullName evidence="8">Aryl aldehyde:NADP oxidoreductase</fullName>
    </alternativeName>
</protein>
<reference key="1">
    <citation type="journal article" date="2003" name="Nature">
        <title>The genome sequence of the filamentous fungus Neurospora crassa.</title>
        <authorList>
            <person name="Galagan J.E."/>
            <person name="Calvo S.E."/>
            <person name="Borkovich K.A."/>
            <person name="Selker E.U."/>
            <person name="Read N.D."/>
            <person name="Jaffe D.B."/>
            <person name="FitzHugh W."/>
            <person name="Ma L.-J."/>
            <person name="Smirnov S."/>
            <person name="Purcell S."/>
            <person name="Rehman B."/>
            <person name="Elkins T."/>
            <person name="Engels R."/>
            <person name="Wang S."/>
            <person name="Nielsen C.B."/>
            <person name="Butler J."/>
            <person name="Endrizzi M."/>
            <person name="Qui D."/>
            <person name="Ianakiev P."/>
            <person name="Bell-Pedersen D."/>
            <person name="Nelson M.A."/>
            <person name="Werner-Washburne M."/>
            <person name="Selitrennikoff C.P."/>
            <person name="Kinsey J.A."/>
            <person name="Braun E.L."/>
            <person name="Zelter A."/>
            <person name="Schulte U."/>
            <person name="Kothe G.O."/>
            <person name="Jedd G."/>
            <person name="Mewes H.-W."/>
            <person name="Staben C."/>
            <person name="Marcotte E."/>
            <person name="Greenberg D."/>
            <person name="Roy A."/>
            <person name="Foley K."/>
            <person name="Naylor J."/>
            <person name="Stange-Thomann N."/>
            <person name="Barrett R."/>
            <person name="Gnerre S."/>
            <person name="Kamal M."/>
            <person name="Kamvysselis M."/>
            <person name="Mauceli E.W."/>
            <person name="Bielke C."/>
            <person name="Rudd S."/>
            <person name="Frishman D."/>
            <person name="Krystofova S."/>
            <person name="Rasmussen C."/>
            <person name="Metzenberg R.L."/>
            <person name="Perkins D.D."/>
            <person name="Kroken S."/>
            <person name="Cogoni C."/>
            <person name="Macino G."/>
            <person name="Catcheside D.E.A."/>
            <person name="Li W."/>
            <person name="Pratt R.J."/>
            <person name="Osmani S.A."/>
            <person name="DeSouza C.P.C."/>
            <person name="Glass N.L."/>
            <person name="Orbach M.J."/>
            <person name="Berglund J.A."/>
            <person name="Voelker R."/>
            <person name="Yarden O."/>
            <person name="Plamann M."/>
            <person name="Seiler S."/>
            <person name="Dunlap J.C."/>
            <person name="Radford A."/>
            <person name="Aramayo R."/>
            <person name="Natvig D.O."/>
            <person name="Alex L.A."/>
            <person name="Mannhaupt G."/>
            <person name="Ebbole D.J."/>
            <person name="Freitag M."/>
            <person name="Paulsen I."/>
            <person name="Sachs M.S."/>
            <person name="Lander E.S."/>
            <person name="Nusbaum C."/>
            <person name="Birren B.W."/>
        </authorList>
    </citation>
    <scope>NUCLEOTIDE SEQUENCE [LARGE SCALE GENOMIC DNA]</scope>
    <source>
        <strain>ATCC 24698 / 74-OR23-1A / CBS 708.71 / DSM 1257 / FGSC 987</strain>
    </source>
</reference>
<reference key="2">
    <citation type="journal article" date="1969" name="Eur. J. Biochem.">
        <title>[Reduction of aromatic acids to aldehydes and alcohols in the cell-free system. 1. Purification and properties of aryl-aldehyde: NADP-oxidoreductase from Neurospora crassa].</title>
        <authorList>
            <person name="Gross G.G."/>
            <person name="Zenk M.H."/>
        </authorList>
    </citation>
    <scope>FUNCTION</scope>
    <scope>CATALYTIC ACTIVITY</scope>
    <scope>BIOPHYSICOCHEMICAL PROPERTIES</scope>
    <scope>COFACTOR</scope>
</reference>
<reference key="3">
    <citation type="journal article" date="1971" name="FEBS Lett.">
        <title>Stoichiometric studies on aryl-aldehyde: NADP oxidoreductase from Neurospra crassa.</title>
        <authorList>
            <person name="Gross G.G."/>
        </authorList>
    </citation>
    <scope>CATALYTIC ACTIVITY</scope>
</reference>
<reference key="4">
    <citation type="journal article" date="2016" name="Adv. Synth. Catal.">
        <title>Selective enzymatic transformation to aldehydes in vivo by fungal carboxylate reductase from Neurospora crassa.</title>
        <authorList>
            <person name="Schwendenwein D."/>
            <person name="Fiume G."/>
            <person name="Weber H."/>
            <person name="Rudroff F."/>
            <person name="Winkler M."/>
        </authorList>
    </citation>
    <scope>FUNCTION</scope>
    <scope>CATALYTIC ACTIVITY</scope>
    <scope>BIOPHYSICOCHEMICAL PROPERTIES</scope>
</reference>
<reference key="5">
    <citation type="journal article" date="2018" name="Front. Microbiol.">
        <title>Identification of Key Residues for Enzymatic Carboxylate Reduction.</title>
        <authorList>
            <person name="Stolterfoht H."/>
            <person name="Steinkellner G."/>
            <person name="Schwendenwein D."/>
            <person name="Pavkov-Keller T."/>
            <person name="Gruber K."/>
            <person name="Winkler M."/>
        </authorList>
    </citation>
    <scope>FUNCTION</scope>
    <scope>DOMAIN</scope>
    <scope>CATALYTIC ACTIVITY</scope>
    <scope>MUTAGENESIS OF SER-183; GLY-184; PRO-189; PRO-234; HIS-237; PRO-285; GLY-310; THR-336; ASP-405; ARG-422; GLU-433; GLU-441; GLY-457; SER-595; GLY-691; GLY-694; TYR-844; LYS-848; ARG-870; GLY-882; PRO-904 AND TRP-978</scope>
</reference>
<comment type="function">
    <text evidence="3 4 5 6">Carboxylic acid reductase that shows a broad range of substrate specificity towards aromatic acids, especially to phenyl carboxylic and phenyl acrylic acids, to convert them into their respective aldehydes (PubMed:11946054, PubMed:27917101, PubMed:29515539, PubMed:4389863). Also able to use aliphatic acids as substrates (PubMed:29515539).</text>
</comment>
<comment type="catalytic activity">
    <reaction evidence="3 4 5 6">
        <text>an aromatic aldehyde + AMP + diphosphate + NADP(+) = an aromatic carboxylate + ATP + NADPH + H(+)</text>
        <dbReference type="Rhea" id="RHEA:19229"/>
        <dbReference type="ChEBI" id="CHEBI:15378"/>
        <dbReference type="ChEBI" id="CHEBI:30616"/>
        <dbReference type="ChEBI" id="CHEBI:33019"/>
        <dbReference type="ChEBI" id="CHEBI:33855"/>
        <dbReference type="ChEBI" id="CHEBI:57783"/>
        <dbReference type="ChEBI" id="CHEBI:58349"/>
        <dbReference type="ChEBI" id="CHEBI:91007"/>
        <dbReference type="ChEBI" id="CHEBI:456215"/>
        <dbReference type="EC" id="1.2.1.30"/>
    </reaction>
    <physiologicalReaction direction="right-to-left" evidence="3 4 5 6">
        <dbReference type="Rhea" id="RHEA:19231"/>
    </physiologicalReaction>
</comment>
<comment type="catalytic activity">
    <reaction evidence="5">
        <text>a carboxylate + ATP + NADPH + H(+) = an aldehyde + AMP + diphosphate + NADP(+)</text>
        <dbReference type="Rhea" id="RHEA:50916"/>
        <dbReference type="ChEBI" id="CHEBI:15378"/>
        <dbReference type="ChEBI" id="CHEBI:17478"/>
        <dbReference type="ChEBI" id="CHEBI:29067"/>
        <dbReference type="ChEBI" id="CHEBI:30616"/>
        <dbReference type="ChEBI" id="CHEBI:33019"/>
        <dbReference type="ChEBI" id="CHEBI:57783"/>
        <dbReference type="ChEBI" id="CHEBI:58349"/>
        <dbReference type="ChEBI" id="CHEBI:456215"/>
    </reaction>
    <physiologicalReaction direction="left-to-right" evidence="5">
        <dbReference type="Rhea" id="RHEA:50917"/>
    </physiologicalReaction>
</comment>
<comment type="catalytic activity">
    <reaction evidence="4">
        <text>benzoate + ATP + NADPH + H(+) = benzaldehyde + AMP + diphosphate + NADP(+)</text>
        <dbReference type="Rhea" id="RHEA:68868"/>
        <dbReference type="ChEBI" id="CHEBI:15378"/>
        <dbReference type="ChEBI" id="CHEBI:16150"/>
        <dbReference type="ChEBI" id="CHEBI:17169"/>
        <dbReference type="ChEBI" id="CHEBI:30616"/>
        <dbReference type="ChEBI" id="CHEBI:33019"/>
        <dbReference type="ChEBI" id="CHEBI:57783"/>
        <dbReference type="ChEBI" id="CHEBI:58349"/>
        <dbReference type="ChEBI" id="CHEBI:456215"/>
    </reaction>
    <physiologicalReaction direction="left-to-right" evidence="4">
        <dbReference type="Rhea" id="RHEA:68869"/>
    </physiologicalReaction>
</comment>
<comment type="catalytic activity">
    <reaction evidence="4">
        <text>(E)-cinnamate + ATP + NADPH + H(+) = (E)-cinnamaldehyde + AMP + diphosphate + NADP(+)</text>
        <dbReference type="Rhea" id="RHEA:68872"/>
        <dbReference type="ChEBI" id="CHEBI:15378"/>
        <dbReference type="ChEBI" id="CHEBI:15669"/>
        <dbReference type="ChEBI" id="CHEBI:16731"/>
        <dbReference type="ChEBI" id="CHEBI:30616"/>
        <dbReference type="ChEBI" id="CHEBI:33019"/>
        <dbReference type="ChEBI" id="CHEBI:57783"/>
        <dbReference type="ChEBI" id="CHEBI:58349"/>
        <dbReference type="ChEBI" id="CHEBI:456215"/>
    </reaction>
    <physiologicalReaction direction="left-to-right" evidence="4">
        <dbReference type="Rhea" id="RHEA:68873"/>
    </physiologicalReaction>
</comment>
<comment type="catalytic activity">
    <reaction evidence="4">
        <text>piperonylate + ATP + NADPH + H(+) = piperonal + AMP + diphosphate + NADP(+)</text>
        <dbReference type="Rhea" id="RHEA:68876"/>
        <dbReference type="ChEBI" id="CHEBI:8240"/>
        <dbReference type="ChEBI" id="CHEBI:15378"/>
        <dbReference type="ChEBI" id="CHEBI:30616"/>
        <dbReference type="ChEBI" id="CHEBI:33019"/>
        <dbReference type="ChEBI" id="CHEBI:57783"/>
        <dbReference type="ChEBI" id="CHEBI:58349"/>
        <dbReference type="ChEBI" id="CHEBI:180537"/>
        <dbReference type="ChEBI" id="CHEBI:456215"/>
    </reaction>
    <physiologicalReaction direction="left-to-right" evidence="4">
        <dbReference type="Rhea" id="RHEA:68877"/>
    </physiologicalReaction>
</comment>
<comment type="catalytic activity">
    <reaction evidence="4">
        <text>salicylate + ATP + NADPH + H(+) = salicylaldehyde + AMP + diphosphate + NADP(+)</text>
        <dbReference type="Rhea" id="RHEA:68880"/>
        <dbReference type="ChEBI" id="CHEBI:15378"/>
        <dbReference type="ChEBI" id="CHEBI:16008"/>
        <dbReference type="ChEBI" id="CHEBI:30616"/>
        <dbReference type="ChEBI" id="CHEBI:30762"/>
        <dbReference type="ChEBI" id="CHEBI:33019"/>
        <dbReference type="ChEBI" id="CHEBI:57783"/>
        <dbReference type="ChEBI" id="CHEBI:58349"/>
        <dbReference type="ChEBI" id="CHEBI:456215"/>
    </reaction>
    <physiologicalReaction direction="left-to-right" evidence="4">
        <dbReference type="Rhea" id="RHEA:68881"/>
    </physiologicalReaction>
</comment>
<comment type="catalytic activity">
    <reaction evidence="4">
        <text>3-hydroxybenzoate + ATP + NADPH + H(+) = 3-hydroxybenzaldehyde + AMP + diphosphate + NADP(+)</text>
        <dbReference type="Rhea" id="RHEA:68884"/>
        <dbReference type="ChEBI" id="CHEBI:15378"/>
        <dbReference type="ChEBI" id="CHEBI:16193"/>
        <dbReference type="ChEBI" id="CHEBI:16207"/>
        <dbReference type="ChEBI" id="CHEBI:30616"/>
        <dbReference type="ChEBI" id="CHEBI:33019"/>
        <dbReference type="ChEBI" id="CHEBI:57783"/>
        <dbReference type="ChEBI" id="CHEBI:58349"/>
        <dbReference type="ChEBI" id="CHEBI:456215"/>
    </reaction>
    <physiologicalReaction direction="left-to-right" evidence="4">
        <dbReference type="Rhea" id="RHEA:68885"/>
    </physiologicalReaction>
</comment>
<comment type="catalytic activity">
    <reaction evidence="4">
        <text>2-methoxybenzoate + ATP + NADPH + H(+) = 2-methoxybenzaldehyde + AMP + diphosphate + NADP(+)</text>
        <dbReference type="Rhea" id="RHEA:68888"/>
        <dbReference type="ChEBI" id="CHEBI:15378"/>
        <dbReference type="ChEBI" id="CHEBI:30616"/>
        <dbReference type="ChEBI" id="CHEBI:33019"/>
        <dbReference type="ChEBI" id="CHEBI:57783"/>
        <dbReference type="ChEBI" id="CHEBI:58349"/>
        <dbReference type="ChEBI" id="CHEBI:59128"/>
        <dbReference type="ChEBI" id="CHEBI:172139"/>
        <dbReference type="ChEBI" id="CHEBI:456215"/>
    </reaction>
    <physiologicalReaction direction="left-to-right" evidence="4">
        <dbReference type="Rhea" id="RHEA:68889"/>
    </physiologicalReaction>
</comment>
<comment type="catalytic activity">
    <reaction evidence="4">
        <text>3-methoxybenzoate + ATP + NADPH + H(+) = 3-methoxybenzaldehyde + AMP + diphosphate + NADP(+)</text>
        <dbReference type="Rhea" id="RHEA:68892"/>
        <dbReference type="ChEBI" id="CHEBI:15378"/>
        <dbReference type="ChEBI" id="CHEBI:30616"/>
        <dbReference type="ChEBI" id="CHEBI:33019"/>
        <dbReference type="ChEBI" id="CHEBI:57783"/>
        <dbReference type="ChEBI" id="CHEBI:58349"/>
        <dbReference type="ChEBI" id="CHEBI:136805"/>
        <dbReference type="ChEBI" id="CHEBI:180538"/>
        <dbReference type="ChEBI" id="CHEBI:456215"/>
    </reaction>
    <physiologicalReaction direction="left-to-right" evidence="4">
        <dbReference type="Rhea" id="RHEA:68893"/>
    </physiologicalReaction>
</comment>
<comment type="catalytic activity">
    <reaction evidence="4">
        <text>4-hydroxybenzoate + ATP + NADPH + H(+) = 4-hydroxybenzaldehyde + AMP + diphosphate + NADP(+)</text>
        <dbReference type="Rhea" id="RHEA:68896"/>
        <dbReference type="ChEBI" id="CHEBI:15378"/>
        <dbReference type="ChEBI" id="CHEBI:17597"/>
        <dbReference type="ChEBI" id="CHEBI:17879"/>
        <dbReference type="ChEBI" id="CHEBI:30616"/>
        <dbReference type="ChEBI" id="CHEBI:33019"/>
        <dbReference type="ChEBI" id="CHEBI:57783"/>
        <dbReference type="ChEBI" id="CHEBI:58349"/>
        <dbReference type="ChEBI" id="CHEBI:456215"/>
    </reaction>
    <physiologicalReaction direction="left-to-right" evidence="4">
        <dbReference type="Rhea" id="RHEA:68897"/>
    </physiologicalReaction>
</comment>
<comment type="catalytic activity">
    <reaction evidence="4">
        <text>4-methoxybenzoate + ATP + NADPH + H(+) = 4-methoxybenzaldehyde + AMP + diphosphate + NADP(+)</text>
        <dbReference type="Rhea" id="RHEA:68900"/>
        <dbReference type="ChEBI" id="CHEBI:15378"/>
        <dbReference type="ChEBI" id="CHEBI:16639"/>
        <dbReference type="ChEBI" id="CHEBI:28235"/>
        <dbReference type="ChEBI" id="CHEBI:30616"/>
        <dbReference type="ChEBI" id="CHEBI:33019"/>
        <dbReference type="ChEBI" id="CHEBI:57783"/>
        <dbReference type="ChEBI" id="CHEBI:58349"/>
        <dbReference type="ChEBI" id="CHEBI:456215"/>
    </reaction>
    <physiologicalReaction direction="left-to-right" evidence="4">
        <dbReference type="Rhea" id="RHEA:68901"/>
    </physiologicalReaction>
</comment>
<comment type="catalytic activity">
    <reaction evidence="4">
        <text>3-phenylpropanoate + ATP + NADPH + H(+) = 3-phenylpropanal + AMP + diphosphate + NADP(+)</text>
        <dbReference type="Rhea" id="RHEA:68904"/>
        <dbReference type="ChEBI" id="CHEBI:15378"/>
        <dbReference type="ChEBI" id="CHEBI:30616"/>
        <dbReference type="ChEBI" id="CHEBI:33019"/>
        <dbReference type="ChEBI" id="CHEBI:39940"/>
        <dbReference type="ChEBI" id="CHEBI:51057"/>
        <dbReference type="ChEBI" id="CHEBI:57783"/>
        <dbReference type="ChEBI" id="CHEBI:58349"/>
        <dbReference type="ChEBI" id="CHEBI:456215"/>
    </reaction>
    <physiologicalReaction direction="left-to-right" evidence="4">
        <dbReference type="Rhea" id="RHEA:68905"/>
    </physiologicalReaction>
</comment>
<comment type="catalytic activity">
    <reaction evidence="4">
        <text>picolinate + ATP + NADPH + H(+) = picolinal + AMP + diphosphate + NADP(+)</text>
        <dbReference type="Rhea" id="RHEA:68908"/>
        <dbReference type="ChEBI" id="CHEBI:15378"/>
        <dbReference type="ChEBI" id="CHEBI:30616"/>
        <dbReference type="ChEBI" id="CHEBI:33019"/>
        <dbReference type="ChEBI" id="CHEBI:38184"/>
        <dbReference type="ChEBI" id="CHEBI:57783"/>
        <dbReference type="ChEBI" id="CHEBI:58349"/>
        <dbReference type="ChEBI" id="CHEBI:73012"/>
        <dbReference type="ChEBI" id="CHEBI:456215"/>
    </reaction>
    <physiologicalReaction direction="left-to-right" evidence="4">
        <dbReference type="Rhea" id="RHEA:68909"/>
    </physiologicalReaction>
</comment>
<comment type="catalytic activity">
    <reaction evidence="5">
        <text>propanoate + ATP + NADPH + H(+) = propanal + AMP + diphosphate + NADP(+)</text>
        <dbReference type="Rhea" id="RHEA:68912"/>
        <dbReference type="ChEBI" id="CHEBI:15378"/>
        <dbReference type="ChEBI" id="CHEBI:17153"/>
        <dbReference type="ChEBI" id="CHEBI:17272"/>
        <dbReference type="ChEBI" id="CHEBI:30616"/>
        <dbReference type="ChEBI" id="CHEBI:33019"/>
        <dbReference type="ChEBI" id="CHEBI:57783"/>
        <dbReference type="ChEBI" id="CHEBI:58349"/>
        <dbReference type="ChEBI" id="CHEBI:456215"/>
    </reaction>
    <physiologicalReaction direction="left-to-right" evidence="5">
        <dbReference type="Rhea" id="RHEA:68913"/>
    </physiologicalReaction>
</comment>
<comment type="catalytic activity">
    <reaction evidence="5">
        <text>butanoate + ATP + NADPH + H(+) = butanal + AMP + diphosphate + NADP(+)</text>
        <dbReference type="Rhea" id="RHEA:68916"/>
        <dbReference type="ChEBI" id="CHEBI:15378"/>
        <dbReference type="ChEBI" id="CHEBI:15743"/>
        <dbReference type="ChEBI" id="CHEBI:17968"/>
        <dbReference type="ChEBI" id="CHEBI:30616"/>
        <dbReference type="ChEBI" id="CHEBI:33019"/>
        <dbReference type="ChEBI" id="CHEBI:57783"/>
        <dbReference type="ChEBI" id="CHEBI:58349"/>
        <dbReference type="ChEBI" id="CHEBI:456215"/>
    </reaction>
    <physiologicalReaction direction="left-to-right" evidence="5">
        <dbReference type="Rhea" id="RHEA:68917"/>
    </physiologicalReaction>
</comment>
<comment type="catalytic activity">
    <reaction evidence="5">
        <text>pentanoate + ATP + NADPH + H(+) = pentanal + AMP + diphosphate + NADP(+)</text>
        <dbReference type="Rhea" id="RHEA:68920"/>
        <dbReference type="ChEBI" id="CHEBI:15378"/>
        <dbReference type="ChEBI" id="CHEBI:30616"/>
        <dbReference type="ChEBI" id="CHEBI:31011"/>
        <dbReference type="ChEBI" id="CHEBI:33019"/>
        <dbReference type="ChEBI" id="CHEBI:57783"/>
        <dbReference type="ChEBI" id="CHEBI:58349"/>
        <dbReference type="ChEBI" id="CHEBI:84069"/>
        <dbReference type="ChEBI" id="CHEBI:456215"/>
    </reaction>
    <physiologicalReaction direction="left-to-right" evidence="5">
        <dbReference type="Rhea" id="RHEA:68921"/>
    </physiologicalReaction>
</comment>
<comment type="catalytic activity">
    <reaction evidence="5">
        <text>hexanoate + ATP + NADPH + H(+) = hexanal + AMP + diphosphate + NADP(+)</text>
        <dbReference type="Rhea" id="RHEA:68924"/>
        <dbReference type="ChEBI" id="CHEBI:15378"/>
        <dbReference type="ChEBI" id="CHEBI:17120"/>
        <dbReference type="ChEBI" id="CHEBI:30616"/>
        <dbReference type="ChEBI" id="CHEBI:33019"/>
        <dbReference type="ChEBI" id="CHEBI:57783"/>
        <dbReference type="ChEBI" id="CHEBI:58349"/>
        <dbReference type="ChEBI" id="CHEBI:88528"/>
        <dbReference type="ChEBI" id="CHEBI:456215"/>
    </reaction>
    <physiologicalReaction direction="left-to-right" evidence="5">
        <dbReference type="Rhea" id="RHEA:68925"/>
    </physiologicalReaction>
</comment>
<comment type="catalytic activity">
    <reaction evidence="5">
        <text>heptanoate + ATP + NADPH + H(+) = heptanal + AMP + diphosphate + NADP(+)</text>
        <dbReference type="Rhea" id="RHEA:68928"/>
        <dbReference type="ChEBI" id="CHEBI:15378"/>
        <dbReference type="ChEBI" id="CHEBI:30616"/>
        <dbReference type="ChEBI" id="CHEBI:32362"/>
        <dbReference type="ChEBI" id="CHEBI:33019"/>
        <dbReference type="ChEBI" id="CHEBI:34787"/>
        <dbReference type="ChEBI" id="CHEBI:57783"/>
        <dbReference type="ChEBI" id="CHEBI:58349"/>
        <dbReference type="ChEBI" id="CHEBI:456215"/>
    </reaction>
    <physiologicalReaction direction="left-to-right" evidence="5">
        <dbReference type="Rhea" id="RHEA:68929"/>
    </physiologicalReaction>
</comment>
<comment type="catalytic activity">
    <reaction evidence="5">
        <text>octanoate + ATP + NADPH + H(+) = octanal + AMP + diphosphate + NADP(+)</text>
        <dbReference type="Rhea" id="RHEA:68932"/>
        <dbReference type="ChEBI" id="CHEBI:15378"/>
        <dbReference type="ChEBI" id="CHEBI:17935"/>
        <dbReference type="ChEBI" id="CHEBI:25646"/>
        <dbReference type="ChEBI" id="CHEBI:30616"/>
        <dbReference type="ChEBI" id="CHEBI:33019"/>
        <dbReference type="ChEBI" id="CHEBI:57783"/>
        <dbReference type="ChEBI" id="CHEBI:58349"/>
        <dbReference type="ChEBI" id="CHEBI:456215"/>
    </reaction>
    <physiologicalReaction direction="left-to-right" evidence="5">
        <dbReference type="Rhea" id="RHEA:68933"/>
    </physiologicalReaction>
</comment>
<comment type="catalytic activity">
    <reaction evidence="5">
        <text>nonanoate + ATP + NADPH + H(+) = nonanal + AMP + diphosphate + NADP(+)</text>
        <dbReference type="Rhea" id="RHEA:68936"/>
        <dbReference type="ChEBI" id="CHEBI:15378"/>
        <dbReference type="ChEBI" id="CHEBI:30616"/>
        <dbReference type="ChEBI" id="CHEBI:32361"/>
        <dbReference type="ChEBI" id="CHEBI:33019"/>
        <dbReference type="ChEBI" id="CHEBI:57783"/>
        <dbReference type="ChEBI" id="CHEBI:58349"/>
        <dbReference type="ChEBI" id="CHEBI:84268"/>
        <dbReference type="ChEBI" id="CHEBI:456215"/>
    </reaction>
    <physiologicalReaction direction="left-to-right" evidence="5">
        <dbReference type="Rhea" id="RHEA:68937"/>
    </physiologicalReaction>
</comment>
<comment type="cofactor">
    <cofactor evidence="6">
        <name>Mg(2+)</name>
        <dbReference type="ChEBI" id="CHEBI:18420"/>
    </cofactor>
</comment>
<comment type="biophysicochemical properties">
    <kinetics>
        <KM evidence="6">167 uM for salicylic acid</KM>
        <KM evidence="6">152 uM for ATP</KM>
        <KM evidence="4">445 uM for cinnamic acid</KM>
        <KM evidence="4">173 uM for piperonylic acid</KM>
        <Vmax evidence="4">2.33 umol/min/mg enzyme towards cinnamic acid</Vmax>
        <Vmax evidence="4">3.7 umol/min/mg enzyme towards piperonylic acid</Vmax>
    </kinetics>
    <phDependence>
        <text evidence="6">Optimum pH is 8.0.</text>
    </phDependence>
    <temperatureDependence>
        <text evidence="6">Optimum temperature is 35 degrees Celsius.</text>
    </temperatureDependence>
</comment>
<comment type="domain">
    <text evidence="5">The NRPS-like carboxylic acid reductase (CAR) has an unusual domain architecture (A-T-R), with the adenylation domain A activating and thioesterifying the carboxylic acid which is then channeled through the phosphopantetheine arm of the T domain, the thioester reductase domain R reducing the carboxylic acid to the corresponding aldehyde.</text>
</comment>
<comment type="similarity">
    <text evidence="9">Belongs to the adenylate-forming reductase family.</text>
</comment>
<sequence>MSQQQNPPYGRRLILDIIKERALNEPNREWVSVPRSSDPKDGWKILTYLDAYNGINRVAHKLTQVCGAAAPGSFPTVAYIGPNDVRYLVFALGAVKAGYKALFISTRNSAEAQVNLFELTNCNVLVFDQSYKATVQPWLHEREMTAILALPADEWFPADQEDFPYNKTFEEAEWDPLMVLHTSGSTGFPKPIVARQGMLAVADQFHNLPPREDGKLMWIVEMSKRAKRLMHPMPLFHAAGMYISMLMIHYWDTPGALGIGERPLSSDLVLDYIEYADVEGMILPPAILEELSRDEKAIQSLQKLNFVSFGGGNLAPEAGDRLVENNVTLCNLISATEFTPFPFYWQYDQKLWRYFNFDTDLFGIDWRLHDGESTYEQVIVRKDKHPGLQGFFYTFPDSSEYSTKDLYKRHPTHEDFWIYQGRADNIIVFSNGEKLNPITIEETLQGHPKVMGAVVVGTNRFQPALIIEPVEHPETEEGRKALLDEIWPTVVRVNKETVAHGQIGRQYMALSTPGKPFLRAGKGTVLRPGTINMYKAEIDKIYEDAEKGVATDEVPKLDLSSSDALIVSIEKLFETSLNAPKLEADTDFFTAGVDSMQVITASRLIRAGLAAAGVNIEASALATRVIYGNPTPKRLADYLLSIVNKDSNQGTLDNEHHVMEALVEKYTRDLPTPKQNKPAPADEGQVVVITGTTGGIGSYLIDICSSSSRVSKIICLNRSEDGKARQTASSSGRGLSTDFSKCEFYHADMSRADLGLGPEVYSRLLSEVDRVIHNQWPVNFNIAVESFEPHIRGCRNLVDFSYKADKNVPIVFVSSIGTVDRWHDEDRIVPEASLDDLSLAAGGYGQSKLVSSLIFDKAAEVSGVPTEVVRVGQVAGPSSEKGYWNKQEWLPSIVASSAYLGVLPDSLGQMTTIDWTPIEAIAKLLLEVSGVIDNVPLDKINGYFHGVNPERTSWSALAPAVQEYYGDRIQKIVPLDEWLEALEKSQEKAEDVTRNPGIKLIDTYRTWSEGYKKGTKFVPLDMTRTKEYSKTMREMHAVTPELMKNWCRQWNF</sequence>